<accession>Q33C44</accession>
<dbReference type="EMBL" id="AB240139">
    <property type="protein sequence ID" value="BAE47991.1"/>
    <property type="molecule type" value="Genomic_DNA"/>
</dbReference>
<dbReference type="RefSeq" id="YP_398853.1">
    <property type="nucleotide sequence ID" value="NC_007602.1"/>
</dbReference>
<dbReference type="SMR" id="Q33C44"/>
<dbReference type="GeneID" id="3776361"/>
<dbReference type="KEGG" id="nto:3776361"/>
<dbReference type="GO" id="GO:0009535">
    <property type="term" value="C:chloroplast thylakoid membrane"/>
    <property type="evidence" value="ECO:0007669"/>
    <property type="project" value="UniProtKB-SubCell"/>
</dbReference>
<dbReference type="GO" id="GO:0009512">
    <property type="term" value="C:cytochrome b6f complex"/>
    <property type="evidence" value="ECO:0007669"/>
    <property type="project" value="InterPro"/>
</dbReference>
<dbReference type="GO" id="GO:0045158">
    <property type="term" value="F:electron transporter, transferring electrons within cytochrome b6/f complex of photosystem II activity"/>
    <property type="evidence" value="ECO:0007669"/>
    <property type="project" value="InterPro"/>
</dbReference>
<dbReference type="GO" id="GO:0017004">
    <property type="term" value="P:cytochrome complex assembly"/>
    <property type="evidence" value="ECO:0007669"/>
    <property type="project" value="UniProtKB-UniRule"/>
</dbReference>
<dbReference type="GO" id="GO:0015979">
    <property type="term" value="P:photosynthesis"/>
    <property type="evidence" value="ECO:0007669"/>
    <property type="project" value="UniProtKB-KW"/>
</dbReference>
<dbReference type="HAMAP" id="MF_00395">
    <property type="entry name" value="Cytb6_f_PetN"/>
    <property type="match status" value="1"/>
</dbReference>
<dbReference type="InterPro" id="IPR036143">
    <property type="entry name" value="Cytochr_b6-f_cplx_su8_sf"/>
</dbReference>
<dbReference type="InterPro" id="IPR005497">
    <property type="entry name" value="Cytochrome_b6-f_cplx_su8"/>
</dbReference>
<dbReference type="Pfam" id="PF03742">
    <property type="entry name" value="PetN"/>
    <property type="match status" value="1"/>
</dbReference>
<dbReference type="SUPFAM" id="SSF103451">
    <property type="entry name" value="PetN subunit of the cytochrome b6f complex"/>
    <property type="match status" value="1"/>
</dbReference>
<sequence length="29" mass="3184">MDIISLAWAALMVVFTFSLSLVVWGRSGL</sequence>
<protein>
    <recommendedName>
        <fullName evidence="1">Cytochrome b6-f complex subunit 8</fullName>
    </recommendedName>
    <alternativeName>
        <fullName evidence="1">Cytochrome b6-f complex subunit PetN</fullName>
    </alternativeName>
    <alternativeName>
        <fullName evidence="1">Cytochrome b6-f complex subunit VIII</fullName>
    </alternativeName>
</protein>
<feature type="chain" id="PRO_0000275559" description="Cytochrome b6-f complex subunit 8">
    <location>
        <begin position="1"/>
        <end position="29"/>
    </location>
</feature>
<feature type="transmembrane region" description="Helical" evidence="1">
    <location>
        <begin position="3"/>
        <end position="23"/>
    </location>
</feature>
<evidence type="ECO:0000255" key="1">
    <source>
        <dbReference type="HAMAP-Rule" id="MF_00395"/>
    </source>
</evidence>
<gene>
    <name evidence="1" type="primary">petN</name>
</gene>
<geneLocation type="chloroplast"/>
<name>PETN_NICTO</name>
<proteinExistence type="inferred from homology"/>
<organism>
    <name type="scientific">Nicotiana tomentosiformis</name>
    <name type="common">Tobacco</name>
    <dbReference type="NCBI Taxonomy" id="4098"/>
    <lineage>
        <taxon>Eukaryota</taxon>
        <taxon>Viridiplantae</taxon>
        <taxon>Streptophyta</taxon>
        <taxon>Embryophyta</taxon>
        <taxon>Tracheophyta</taxon>
        <taxon>Spermatophyta</taxon>
        <taxon>Magnoliopsida</taxon>
        <taxon>eudicotyledons</taxon>
        <taxon>Gunneridae</taxon>
        <taxon>Pentapetalae</taxon>
        <taxon>asterids</taxon>
        <taxon>lamiids</taxon>
        <taxon>Solanales</taxon>
        <taxon>Solanaceae</taxon>
        <taxon>Nicotianoideae</taxon>
        <taxon>Nicotianeae</taxon>
        <taxon>Nicotiana</taxon>
    </lineage>
</organism>
<reference key="1">
    <citation type="journal article" date="2006" name="Mol. Genet. Genomics">
        <title>The chloroplast genome of Nicotiana sylvestris and Nicotiana tomentosiformis: complete sequencing confirms that the Nicotiana sylvestris progenitor is the maternal genome donor of Nicotiana tabacum.</title>
        <authorList>
            <person name="Yukawa M."/>
            <person name="Tsudzuki T."/>
            <person name="Sugiura M."/>
        </authorList>
    </citation>
    <scope>NUCLEOTIDE SEQUENCE [LARGE SCALE GENOMIC DNA]</scope>
</reference>
<keyword id="KW-0150">Chloroplast</keyword>
<keyword id="KW-0249">Electron transport</keyword>
<keyword id="KW-0472">Membrane</keyword>
<keyword id="KW-0602">Photosynthesis</keyword>
<keyword id="KW-0934">Plastid</keyword>
<keyword id="KW-0793">Thylakoid</keyword>
<keyword id="KW-0812">Transmembrane</keyword>
<keyword id="KW-1133">Transmembrane helix</keyword>
<keyword id="KW-0813">Transport</keyword>
<comment type="function">
    <text evidence="1">Component of the cytochrome b6-f complex, which mediates electron transfer between photosystem II (PSII) and photosystem I (PSI), cyclic electron flow around PSI, and state transitions.</text>
</comment>
<comment type="subunit">
    <text evidence="1">The 4 large subunits of the cytochrome b6-f complex are cytochrome b6, subunit IV (17 kDa polypeptide, PetD), cytochrome f and the Rieske protein, while the 4 small subunits are PetG, PetL, PetM and PetN. The complex functions as a dimer.</text>
</comment>
<comment type="subcellular location">
    <subcellularLocation>
        <location>Plastid</location>
        <location>Chloroplast thylakoid membrane</location>
        <topology>Single-pass membrane protein</topology>
    </subcellularLocation>
</comment>
<comment type="similarity">
    <text evidence="1">Belongs to the PetN family.</text>
</comment>